<evidence type="ECO:0000250" key="1">
    <source>
        <dbReference type="UniProtKB" id="A3DH97"/>
    </source>
</evidence>
<evidence type="ECO:0000255" key="2"/>
<evidence type="ECO:0000255" key="3">
    <source>
        <dbReference type="PROSITE-ProRule" id="PRU00498"/>
    </source>
</evidence>
<evidence type="ECO:0000255" key="4">
    <source>
        <dbReference type="PROSITE-ProRule" id="PRU01096"/>
    </source>
</evidence>
<evidence type="ECO:0000303" key="5">
    <source>
    </source>
</evidence>
<evidence type="ECO:0000305" key="6"/>
<evidence type="ECO:0000312" key="7">
    <source>
        <dbReference type="EMBL" id="ANM67882.1"/>
    </source>
</evidence>
<evidence type="ECO:0000312" key="8">
    <source>
        <dbReference type="EMBL" id="CAA20594.1"/>
    </source>
</evidence>
<gene>
    <name evidence="5" type="primary">XYN5</name>
    <name evidence="7" type="ordered locus">At4g33810</name>
    <name evidence="8" type="ORF">T16L1.300</name>
</gene>
<keyword id="KW-0025">Alternative splicing</keyword>
<keyword id="KW-0119">Carbohydrate metabolism</keyword>
<keyword id="KW-0325">Glycoprotein</keyword>
<keyword id="KW-0326">Glycosidase</keyword>
<keyword id="KW-0378">Hydrolase</keyword>
<keyword id="KW-0624">Polysaccharide degradation</keyword>
<keyword id="KW-1185">Reference proteome</keyword>
<keyword id="KW-0732">Signal</keyword>
<keyword id="KW-0858">Xylan degradation</keyword>
<dbReference type="EC" id="3.2.1.8" evidence="4"/>
<dbReference type="EMBL" id="AL031394">
    <property type="protein sequence ID" value="CAA20594.1"/>
    <property type="status" value="ALT_SEQ"/>
    <property type="molecule type" value="Genomic_DNA"/>
</dbReference>
<dbReference type="EMBL" id="AL161584">
    <property type="protein sequence ID" value="CAB80098.1"/>
    <property type="status" value="ALT_SEQ"/>
    <property type="molecule type" value="Genomic_DNA"/>
</dbReference>
<dbReference type="EMBL" id="CP002687">
    <property type="protein sequence ID" value="AEE86280.1"/>
    <property type="molecule type" value="Genomic_DNA"/>
</dbReference>
<dbReference type="EMBL" id="CP002687">
    <property type="protein sequence ID" value="ANM67882.1"/>
    <property type="molecule type" value="Genomic_DNA"/>
</dbReference>
<dbReference type="EMBL" id="CP002687">
    <property type="protein sequence ID" value="ANM67883.1"/>
    <property type="molecule type" value="Genomic_DNA"/>
</dbReference>
<dbReference type="EMBL" id="CP002687">
    <property type="protein sequence ID" value="ANM67884.1"/>
    <property type="molecule type" value="Genomic_DNA"/>
</dbReference>
<dbReference type="EMBL" id="CP002687">
    <property type="protein sequence ID" value="ANM67885.1"/>
    <property type="molecule type" value="Genomic_DNA"/>
</dbReference>
<dbReference type="PIR" id="T04998">
    <property type="entry name" value="T04998"/>
</dbReference>
<dbReference type="RefSeq" id="NP_001329678.1">
    <molecule id="A0A1P8B8F8-1"/>
    <property type="nucleotide sequence ID" value="NM_001342235.1"/>
</dbReference>
<dbReference type="RefSeq" id="NP_001329679.1">
    <molecule id="A0A1P8B8F8-1"/>
    <property type="nucleotide sequence ID" value="NM_001342236.1"/>
</dbReference>
<dbReference type="RefSeq" id="NP_001329680.1">
    <molecule id="A0A1P8B8F8-2"/>
    <property type="nucleotide sequence ID" value="NM_001342238.1"/>
</dbReference>
<dbReference type="RefSeq" id="NP_001329681.1">
    <molecule id="A0A1P8B8F8-1"/>
    <property type="nucleotide sequence ID" value="NM_001342237.1"/>
</dbReference>
<dbReference type="RefSeq" id="NP_195107.2">
    <molecule id="A0A1P8B8F8-2"/>
    <property type="nucleotide sequence ID" value="NM_119539.3"/>
</dbReference>
<dbReference type="SMR" id="A0A1P8B8F8"/>
<dbReference type="FunCoup" id="A0A1P8B8F8">
    <property type="interactions" value="5"/>
</dbReference>
<dbReference type="STRING" id="3702.A0A1P8B8F8"/>
<dbReference type="CAZy" id="CBM22">
    <property type="family name" value="Carbohydrate-Binding Module Family 22"/>
</dbReference>
<dbReference type="CAZy" id="GH10">
    <property type="family name" value="Glycoside Hydrolase Family 10"/>
</dbReference>
<dbReference type="GlyCosmos" id="A0A1P8B8F8">
    <property type="glycosylation" value="7 sites, No reported glycans"/>
</dbReference>
<dbReference type="GlyGen" id="A0A1P8B8F8">
    <property type="glycosylation" value="7 sites"/>
</dbReference>
<dbReference type="PaxDb" id="3702-AT4G33810.1"/>
<dbReference type="ProteomicsDB" id="243045">
    <molecule id="A0A1P8B8F8-1"/>
</dbReference>
<dbReference type="EnsemblPlants" id="AT4G33810.1">
    <molecule id="A0A1P8B8F8-2"/>
    <property type="protein sequence ID" value="AT4G33810.1"/>
    <property type="gene ID" value="AT4G33810"/>
</dbReference>
<dbReference type="EnsemblPlants" id="AT4G33810.2">
    <molecule id="A0A1P8B8F8-1"/>
    <property type="protein sequence ID" value="AT4G33810.2"/>
    <property type="gene ID" value="AT4G33810"/>
</dbReference>
<dbReference type="EnsemblPlants" id="AT4G33810.3">
    <molecule id="A0A1P8B8F8-1"/>
    <property type="protein sequence ID" value="AT4G33810.3"/>
    <property type="gene ID" value="AT4G33810"/>
</dbReference>
<dbReference type="EnsemblPlants" id="AT4G33810.4">
    <molecule id="A0A1P8B8F8-1"/>
    <property type="protein sequence ID" value="AT4G33810.4"/>
    <property type="gene ID" value="AT4G33810"/>
</dbReference>
<dbReference type="EnsemblPlants" id="AT4G33810.5">
    <molecule id="A0A1P8B8F8-2"/>
    <property type="protein sequence ID" value="AT4G33810.5"/>
    <property type="gene ID" value="AT4G33810"/>
</dbReference>
<dbReference type="GeneID" id="829523"/>
<dbReference type="Gramene" id="AT4G33810.1">
    <molecule id="A0A1P8B8F8-2"/>
    <property type="protein sequence ID" value="AT4G33810.1"/>
    <property type="gene ID" value="AT4G33810"/>
</dbReference>
<dbReference type="Gramene" id="AT4G33810.2">
    <molecule id="A0A1P8B8F8-1"/>
    <property type="protein sequence ID" value="AT4G33810.2"/>
    <property type="gene ID" value="AT4G33810"/>
</dbReference>
<dbReference type="Gramene" id="AT4G33810.3">
    <molecule id="A0A1P8B8F8-1"/>
    <property type="protein sequence ID" value="AT4G33810.3"/>
    <property type="gene ID" value="AT4G33810"/>
</dbReference>
<dbReference type="Gramene" id="AT4G33810.4">
    <molecule id="A0A1P8B8F8-1"/>
    <property type="protein sequence ID" value="AT4G33810.4"/>
    <property type="gene ID" value="AT4G33810"/>
</dbReference>
<dbReference type="Gramene" id="AT4G33810.5">
    <molecule id="A0A1P8B8F8-2"/>
    <property type="protein sequence ID" value="AT4G33810.5"/>
    <property type="gene ID" value="AT4G33810"/>
</dbReference>
<dbReference type="KEGG" id="ath:AT4G33810"/>
<dbReference type="Araport" id="AT4G33810"/>
<dbReference type="TAIR" id="AT4G33810"/>
<dbReference type="eggNOG" id="ENOG502QSCW">
    <property type="taxonomic scope" value="Eukaryota"/>
</dbReference>
<dbReference type="HOGENOM" id="CLU_008797_4_0_1"/>
<dbReference type="InParanoid" id="A0A1P8B8F8"/>
<dbReference type="UniPathway" id="UPA00114"/>
<dbReference type="PRO" id="PR:A0A1P8B8F8"/>
<dbReference type="Proteomes" id="UP000006548">
    <property type="component" value="Chromosome 4"/>
</dbReference>
<dbReference type="ExpressionAtlas" id="A0A1P8B8F8">
    <property type="expression patterns" value="baseline and differential"/>
</dbReference>
<dbReference type="GO" id="GO:0031176">
    <property type="term" value="F:endo-1,4-beta-xylanase activity"/>
    <property type="evidence" value="ECO:0007669"/>
    <property type="project" value="UniProtKB-EC"/>
</dbReference>
<dbReference type="GO" id="GO:0045493">
    <property type="term" value="P:xylan catabolic process"/>
    <property type="evidence" value="ECO:0007669"/>
    <property type="project" value="UniProtKB-UniPathway"/>
</dbReference>
<dbReference type="FunFam" id="3.20.20.80:FF:000104">
    <property type="entry name" value="Endo-1,4-beta-xylanase A"/>
    <property type="match status" value="1"/>
</dbReference>
<dbReference type="Gene3D" id="2.60.120.260">
    <property type="entry name" value="Galactose-binding domain-like"/>
    <property type="match status" value="1"/>
</dbReference>
<dbReference type="Gene3D" id="3.20.20.80">
    <property type="entry name" value="Glycosidases"/>
    <property type="match status" value="1"/>
</dbReference>
<dbReference type="InterPro" id="IPR044846">
    <property type="entry name" value="GH10"/>
</dbReference>
<dbReference type="InterPro" id="IPR001000">
    <property type="entry name" value="GH10_dom"/>
</dbReference>
<dbReference type="InterPro" id="IPR017853">
    <property type="entry name" value="Glycoside_hydrolase_SF"/>
</dbReference>
<dbReference type="PANTHER" id="PTHR31490:SF52">
    <property type="entry name" value="ENDO-1,4-BETA-XYLANASE 5-RELATED"/>
    <property type="match status" value="1"/>
</dbReference>
<dbReference type="PANTHER" id="PTHR31490">
    <property type="entry name" value="GLYCOSYL HYDROLASE"/>
    <property type="match status" value="1"/>
</dbReference>
<dbReference type="Pfam" id="PF00331">
    <property type="entry name" value="Glyco_hydro_10"/>
    <property type="match status" value="1"/>
</dbReference>
<dbReference type="SMART" id="SM00633">
    <property type="entry name" value="Glyco_10"/>
    <property type="match status" value="1"/>
</dbReference>
<dbReference type="SUPFAM" id="SSF51445">
    <property type="entry name" value="(Trans)glycosidases"/>
    <property type="match status" value="1"/>
</dbReference>
<dbReference type="PROSITE" id="PS51760">
    <property type="entry name" value="GH10_2"/>
    <property type="match status" value="1"/>
</dbReference>
<sequence>MKNINNGFFLCMLLLLWCFVHSGISIDPFSPSDSLKTECVMKPPRSSETKGLLQFSRSVEDDSDEEWKIDGSGSIREMTQRIQLHEGNIYSFSAWVKLREGNNKKVGVVFRTENGRFVHGGEVRAKKRCWTLLKGGIVPDVSGSVDIFFESDDKEAKISASDVSLKQFSKQEWKLKQDQLIEKIRKSKVRFEVTYQNKTAVKGAVISIEQTKPSFLLGCAMNFRILQSEGYRNWFASRFKITSFTNEMKWYTTEKERGHENYTAADSMLKFAEENGILVRGHTVLWDDPLMQPTWVPKIEDPNDLMNVTLNRINSVMTRYKGKLTGWDVVNENVHWDYFEKMLGANASSSFYNLAFKLDPDVTMFVNEYNTIENRVEVTATPVKVKEKMEEILAYPGNMNIKGAIGAQGHFRPTQPNLAYMRSALDTLGSLGLPIWLTEVDMPKCPNQEVYIEEILREAYSHPAVKGIIIFAGPEVSGFDKLTLADKYFNNTATGDVIDKLLKEWQQSSEIPKIFMTDSENDEEEVSLLHGHYNVNVSHPWMKNMSTSFSLEVTKEMGQRQVVRVVINA</sequence>
<organism>
    <name type="scientific">Arabidopsis thaliana</name>
    <name type="common">Mouse-ear cress</name>
    <dbReference type="NCBI Taxonomy" id="3702"/>
    <lineage>
        <taxon>Eukaryota</taxon>
        <taxon>Viridiplantae</taxon>
        <taxon>Streptophyta</taxon>
        <taxon>Embryophyta</taxon>
        <taxon>Tracheophyta</taxon>
        <taxon>Spermatophyta</taxon>
        <taxon>Magnoliopsida</taxon>
        <taxon>eudicotyledons</taxon>
        <taxon>Gunneridae</taxon>
        <taxon>Pentapetalae</taxon>
        <taxon>rosids</taxon>
        <taxon>malvids</taxon>
        <taxon>Brassicales</taxon>
        <taxon>Brassicaceae</taxon>
        <taxon>Camelineae</taxon>
        <taxon>Arabidopsis</taxon>
    </lineage>
</organism>
<protein>
    <recommendedName>
        <fullName evidence="5">Endo-1,4-beta-xylanase 5</fullName>
        <shortName evidence="5">AtXyn5</shortName>
        <shortName evidence="5">Xylan endohydrolase 5</shortName>
        <shortName evidence="5">Xylanase 5</shortName>
        <ecNumber evidence="4">3.2.1.8</ecNumber>
    </recommendedName>
</protein>
<accession>A0A1P8B8F8</accession>
<accession>F4JJU5</accession>
<accession>O81897</accession>
<proteinExistence type="inferred from homology"/>
<reference key="1">
    <citation type="journal article" date="1999" name="Nature">
        <title>Sequence and analysis of chromosome 4 of the plant Arabidopsis thaliana.</title>
        <authorList>
            <person name="Mayer K.F.X."/>
            <person name="Schueller C."/>
            <person name="Wambutt R."/>
            <person name="Murphy G."/>
            <person name="Volckaert G."/>
            <person name="Pohl T."/>
            <person name="Duesterhoeft A."/>
            <person name="Stiekema W."/>
            <person name="Entian K.-D."/>
            <person name="Terryn N."/>
            <person name="Harris B."/>
            <person name="Ansorge W."/>
            <person name="Brandt P."/>
            <person name="Grivell L.A."/>
            <person name="Rieger M."/>
            <person name="Weichselgartner M."/>
            <person name="de Simone V."/>
            <person name="Obermaier B."/>
            <person name="Mache R."/>
            <person name="Mueller M."/>
            <person name="Kreis M."/>
            <person name="Delseny M."/>
            <person name="Puigdomenech P."/>
            <person name="Watson M."/>
            <person name="Schmidtheini T."/>
            <person name="Reichert B."/>
            <person name="Portetelle D."/>
            <person name="Perez-Alonso M."/>
            <person name="Boutry M."/>
            <person name="Bancroft I."/>
            <person name="Vos P."/>
            <person name="Hoheisel J."/>
            <person name="Zimmermann W."/>
            <person name="Wedler H."/>
            <person name="Ridley P."/>
            <person name="Langham S.-A."/>
            <person name="McCullagh B."/>
            <person name="Bilham L."/>
            <person name="Robben J."/>
            <person name="van der Schueren J."/>
            <person name="Grymonprez B."/>
            <person name="Chuang Y.-J."/>
            <person name="Vandenbussche F."/>
            <person name="Braeken M."/>
            <person name="Weltjens I."/>
            <person name="Voet M."/>
            <person name="Bastiaens I."/>
            <person name="Aert R."/>
            <person name="Defoor E."/>
            <person name="Weitzenegger T."/>
            <person name="Bothe G."/>
            <person name="Ramsperger U."/>
            <person name="Hilbert H."/>
            <person name="Braun M."/>
            <person name="Holzer E."/>
            <person name="Brandt A."/>
            <person name="Peters S."/>
            <person name="van Staveren M."/>
            <person name="Dirkse W."/>
            <person name="Mooijman P."/>
            <person name="Klein Lankhorst R."/>
            <person name="Rose M."/>
            <person name="Hauf J."/>
            <person name="Koetter P."/>
            <person name="Berneiser S."/>
            <person name="Hempel S."/>
            <person name="Feldpausch M."/>
            <person name="Lamberth S."/>
            <person name="Van den Daele H."/>
            <person name="De Keyser A."/>
            <person name="Buysshaert C."/>
            <person name="Gielen J."/>
            <person name="Villarroel R."/>
            <person name="De Clercq R."/>
            <person name="van Montagu M."/>
            <person name="Rogers J."/>
            <person name="Cronin A."/>
            <person name="Quail M.A."/>
            <person name="Bray-Allen S."/>
            <person name="Clark L."/>
            <person name="Doggett J."/>
            <person name="Hall S."/>
            <person name="Kay M."/>
            <person name="Lennard N."/>
            <person name="McLay K."/>
            <person name="Mayes R."/>
            <person name="Pettett A."/>
            <person name="Rajandream M.A."/>
            <person name="Lyne M."/>
            <person name="Benes V."/>
            <person name="Rechmann S."/>
            <person name="Borkova D."/>
            <person name="Bloecker H."/>
            <person name="Scharfe M."/>
            <person name="Grimm M."/>
            <person name="Loehnert T.-H."/>
            <person name="Dose S."/>
            <person name="de Haan M."/>
            <person name="Maarse A.C."/>
            <person name="Schaefer M."/>
            <person name="Mueller-Auer S."/>
            <person name="Gabel C."/>
            <person name="Fuchs M."/>
            <person name="Fartmann B."/>
            <person name="Granderath K."/>
            <person name="Dauner D."/>
            <person name="Herzl A."/>
            <person name="Neumann S."/>
            <person name="Argiriou A."/>
            <person name="Vitale D."/>
            <person name="Liguori R."/>
            <person name="Piravandi E."/>
            <person name="Massenet O."/>
            <person name="Quigley F."/>
            <person name="Clabauld G."/>
            <person name="Muendlein A."/>
            <person name="Felber R."/>
            <person name="Schnabl S."/>
            <person name="Hiller R."/>
            <person name="Schmidt W."/>
            <person name="Lecharny A."/>
            <person name="Aubourg S."/>
            <person name="Chefdor F."/>
            <person name="Cooke R."/>
            <person name="Berger C."/>
            <person name="Monfort A."/>
            <person name="Casacuberta E."/>
            <person name="Gibbons T."/>
            <person name="Weber N."/>
            <person name="Vandenbol M."/>
            <person name="Bargues M."/>
            <person name="Terol J."/>
            <person name="Torres A."/>
            <person name="Perez-Perez A."/>
            <person name="Purnelle B."/>
            <person name="Bent E."/>
            <person name="Johnson S."/>
            <person name="Tacon D."/>
            <person name="Jesse T."/>
            <person name="Heijnen L."/>
            <person name="Schwarz S."/>
            <person name="Scholler P."/>
            <person name="Heber S."/>
            <person name="Francs P."/>
            <person name="Bielke C."/>
            <person name="Frishman D."/>
            <person name="Haase D."/>
            <person name="Lemcke K."/>
            <person name="Mewes H.-W."/>
            <person name="Stocker S."/>
            <person name="Zaccaria P."/>
            <person name="Bevan M."/>
            <person name="Wilson R.K."/>
            <person name="de la Bastide M."/>
            <person name="Habermann K."/>
            <person name="Parnell L."/>
            <person name="Dedhia N."/>
            <person name="Gnoj L."/>
            <person name="Schutz K."/>
            <person name="Huang E."/>
            <person name="Spiegel L."/>
            <person name="Sekhon M."/>
            <person name="Murray J."/>
            <person name="Sheet P."/>
            <person name="Cordes M."/>
            <person name="Abu-Threideh J."/>
            <person name="Stoneking T."/>
            <person name="Kalicki J."/>
            <person name="Graves T."/>
            <person name="Harmon G."/>
            <person name="Edwards J."/>
            <person name="Latreille P."/>
            <person name="Courtney L."/>
            <person name="Cloud J."/>
            <person name="Abbott A."/>
            <person name="Scott K."/>
            <person name="Johnson D."/>
            <person name="Minx P."/>
            <person name="Bentley D."/>
            <person name="Fulton B."/>
            <person name="Miller N."/>
            <person name="Greco T."/>
            <person name="Kemp K."/>
            <person name="Kramer J."/>
            <person name="Fulton L."/>
            <person name="Mardis E."/>
            <person name="Dante M."/>
            <person name="Pepin K."/>
            <person name="Hillier L.W."/>
            <person name="Nelson J."/>
            <person name="Spieth J."/>
            <person name="Ryan E."/>
            <person name="Andrews S."/>
            <person name="Geisel C."/>
            <person name="Layman D."/>
            <person name="Du H."/>
            <person name="Ali J."/>
            <person name="Berghoff A."/>
            <person name="Jones K."/>
            <person name="Drone K."/>
            <person name="Cotton M."/>
            <person name="Joshu C."/>
            <person name="Antonoiu B."/>
            <person name="Zidanic M."/>
            <person name="Strong C."/>
            <person name="Sun H."/>
            <person name="Lamar B."/>
            <person name="Yordan C."/>
            <person name="Ma P."/>
            <person name="Zhong J."/>
            <person name="Preston R."/>
            <person name="Vil D."/>
            <person name="Shekher M."/>
            <person name="Matero A."/>
            <person name="Shah R."/>
            <person name="Swaby I.K."/>
            <person name="O'Shaughnessy A."/>
            <person name="Rodriguez M."/>
            <person name="Hoffman J."/>
            <person name="Till S."/>
            <person name="Granat S."/>
            <person name="Shohdy N."/>
            <person name="Hasegawa A."/>
            <person name="Hameed A."/>
            <person name="Lodhi M."/>
            <person name="Johnson A."/>
            <person name="Chen E."/>
            <person name="Marra M.A."/>
            <person name="Martienssen R."/>
            <person name="McCombie W.R."/>
        </authorList>
    </citation>
    <scope>NUCLEOTIDE SEQUENCE [LARGE SCALE GENOMIC DNA]</scope>
    <source>
        <strain>cv. Columbia</strain>
    </source>
</reference>
<reference key="2">
    <citation type="journal article" date="2017" name="Plant J.">
        <title>Araport11: a complete reannotation of the Arabidopsis thaliana reference genome.</title>
        <authorList>
            <person name="Cheng C.Y."/>
            <person name="Krishnakumar V."/>
            <person name="Chan A.P."/>
            <person name="Thibaud-Nissen F."/>
            <person name="Schobel S."/>
            <person name="Town C.D."/>
        </authorList>
    </citation>
    <scope>GENOME REANNOTATION</scope>
    <source>
        <strain>cv. Columbia</strain>
    </source>
</reference>
<reference key="3">
    <citation type="journal article" date="2002" name="Plant Cell Physiol.">
        <title>A xylanase, AtXyn1, is predominantly expressed in vascular bundles, and four putative xylanase genes were identified in the Arabidopsis thaliana genome.</title>
        <authorList>
            <person name="Suzuki M."/>
            <person name="Kato A."/>
            <person name="Nagata N."/>
            <person name="Komeda Y."/>
        </authorList>
    </citation>
    <scope>GENE FAMILY</scope>
    <source>
        <strain>cv. Columbia</strain>
    </source>
</reference>
<name>XYN5_ARATH</name>
<comment type="function">
    <text evidence="1">Binds to and hydrolyzes insoluble and soluble xylan substrates.</text>
</comment>
<comment type="catalytic activity">
    <reaction evidence="4">
        <text>Endohydrolysis of (1-&gt;4)-beta-D-xylosidic linkages in xylans.</text>
        <dbReference type="EC" id="3.2.1.8"/>
    </reaction>
</comment>
<comment type="pathway">
    <text evidence="4">Glycan degradation; xylan degradation.</text>
</comment>
<comment type="alternative products">
    <event type="alternative splicing"/>
    <isoform>
        <id>A0A1P8B8F8-1</id>
        <name>1</name>
        <sequence type="displayed"/>
    </isoform>
    <isoform>
        <id>A0A1P8B8F8-2</id>
        <name>2</name>
        <sequence type="described" ref="VSP_059824"/>
    </isoform>
</comment>
<comment type="domain">
    <text evidence="1">The GH10 domain binds to xylan.</text>
</comment>
<comment type="similarity">
    <text evidence="4">Belongs to the glycosyl hydrolase 10 (cellulase F) family.</text>
</comment>
<comment type="sequence caution" evidence="6">
    <conflict type="erroneous gene model prediction">
        <sequence resource="EMBL-CDS" id="CAA20594"/>
    </conflict>
</comment>
<comment type="sequence caution" evidence="6">
    <conflict type="erroneous gene model prediction">
        <sequence resource="EMBL-CDS" id="CAB80098"/>
    </conflict>
</comment>
<feature type="signal peptide" evidence="2">
    <location>
        <begin position="1"/>
        <end position="25"/>
    </location>
</feature>
<feature type="chain" id="PRO_5015267967" description="Endo-1,4-beta-xylanase 5">
    <location>
        <begin position="26"/>
        <end position="569"/>
    </location>
</feature>
<feature type="domain" description="GH10" evidence="4">
    <location>
        <begin position="209"/>
        <end position="500"/>
    </location>
</feature>
<feature type="active site" description="Proton donor" evidence="4">
    <location>
        <position position="332"/>
    </location>
</feature>
<feature type="active site" description="Nucleophile" evidence="4">
    <location>
        <position position="439"/>
    </location>
</feature>
<feature type="glycosylation site" description="N-linked (GlcNAc...) asparagine" evidence="3">
    <location>
        <position position="197"/>
    </location>
</feature>
<feature type="glycosylation site" description="N-linked (GlcNAc...) asparagine" evidence="3">
    <location>
        <position position="261"/>
    </location>
</feature>
<feature type="glycosylation site" description="N-linked (GlcNAc...) asparagine" evidence="3">
    <location>
        <position position="307"/>
    </location>
</feature>
<feature type="glycosylation site" description="N-linked (GlcNAc...) asparagine" evidence="3">
    <location>
        <position position="346"/>
    </location>
</feature>
<feature type="glycosylation site" description="N-linked (GlcNAc...) asparagine" evidence="3">
    <location>
        <position position="490"/>
    </location>
</feature>
<feature type="glycosylation site" description="N-linked (GlcNAc...) asparagine" evidence="3">
    <location>
        <position position="536"/>
    </location>
</feature>
<feature type="glycosylation site" description="N-linked (GlcNAc...) asparagine" evidence="3">
    <location>
        <position position="544"/>
    </location>
</feature>
<feature type="splice variant" id="VSP_059824" description="In isoform 2.">
    <location>
        <begin position="1"/>
        <end position="40"/>
    </location>
</feature>